<comment type="catalytic activity">
    <reaction evidence="1">
        <text>L-histidinol phosphate + 2-oxoglutarate = 3-(imidazol-4-yl)-2-oxopropyl phosphate + L-glutamate</text>
        <dbReference type="Rhea" id="RHEA:23744"/>
        <dbReference type="ChEBI" id="CHEBI:16810"/>
        <dbReference type="ChEBI" id="CHEBI:29985"/>
        <dbReference type="ChEBI" id="CHEBI:57766"/>
        <dbReference type="ChEBI" id="CHEBI:57980"/>
        <dbReference type="EC" id="2.6.1.9"/>
    </reaction>
</comment>
<comment type="cofactor">
    <cofactor evidence="1">
        <name>pyridoxal 5'-phosphate</name>
        <dbReference type="ChEBI" id="CHEBI:597326"/>
    </cofactor>
</comment>
<comment type="pathway">
    <text evidence="1">Amino-acid biosynthesis; L-histidine biosynthesis; L-histidine from 5-phospho-alpha-D-ribose 1-diphosphate: step 7/9.</text>
</comment>
<comment type="subunit">
    <text evidence="1">Homodimer.</text>
</comment>
<comment type="similarity">
    <text evidence="1">Belongs to the class-II pyridoxal-phosphate-dependent aminotransferase family. Histidinol-phosphate aminotransferase subfamily.</text>
</comment>
<accession>Q66C50</accession>
<organism>
    <name type="scientific">Yersinia pseudotuberculosis serotype I (strain IP32953)</name>
    <dbReference type="NCBI Taxonomy" id="273123"/>
    <lineage>
        <taxon>Bacteria</taxon>
        <taxon>Pseudomonadati</taxon>
        <taxon>Pseudomonadota</taxon>
        <taxon>Gammaproteobacteria</taxon>
        <taxon>Enterobacterales</taxon>
        <taxon>Yersiniaceae</taxon>
        <taxon>Yersinia</taxon>
    </lineage>
</organism>
<proteinExistence type="inferred from homology"/>
<gene>
    <name evidence="1" type="primary">hisC</name>
    <name type="ordered locus">YPTB1560</name>
</gene>
<sequence length="382" mass="41889">MSQSNNVTDLARANIRALTPYMSARRLGGNGDVWLNANEYPLGTEYQLTTQTFNRYPECQPKHVIERYAAYAGLPPEQVLVSRGADEGIELLIRAFCEPGQDAILFCPPTYGMYAVSAETFGVERRTVPAQADWQLDLPAIANNLDQVKVIYVCSPNNPTGNLINPADLQAVLALAQGRAIVAIDEAYIEFCPQASVSNWLKDYPNLVILRTLSKAFALAGLRCGFTLANSDIIQLLLKVIAPYPLSTPVADIAAQALSPKGIEQMRQRVSEVRANRAWLQSALQDCACVEQVFTSESNYLLARFTASSSVFNALWDQGIILRDQNKQPGLANCLRITIGTRQECERVIAALAPLPGIDNSNNIDNQSKTHSQTSSIRKGTI</sequence>
<name>HIS8_YERPS</name>
<dbReference type="EC" id="2.6.1.9" evidence="1"/>
<dbReference type="EMBL" id="BX936398">
    <property type="protein sequence ID" value="CAH20799.1"/>
    <property type="molecule type" value="Genomic_DNA"/>
</dbReference>
<dbReference type="RefSeq" id="WP_011192121.1">
    <property type="nucleotide sequence ID" value="NC_006155.1"/>
</dbReference>
<dbReference type="SMR" id="Q66C50"/>
<dbReference type="KEGG" id="ypo:BZ17_955"/>
<dbReference type="KEGG" id="yps:YPTB1560"/>
<dbReference type="PATRIC" id="fig|273123.14.peg.1015"/>
<dbReference type="UniPathway" id="UPA00031">
    <property type="reaction ID" value="UER00012"/>
</dbReference>
<dbReference type="Proteomes" id="UP000001011">
    <property type="component" value="Chromosome"/>
</dbReference>
<dbReference type="GO" id="GO:0004400">
    <property type="term" value="F:histidinol-phosphate transaminase activity"/>
    <property type="evidence" value="ECO:0007669"/>
    <property type="project" value="UniProtKB-UniRule"/>
</dbReference>
<dbReference type="GO" id="GO:0030170">
    <property type="term" value="F:pyridoxal phosphate binding"/>
    <property type="evidence" value="ECO:0007669"/>
    <property type="project" value="InterPro"/>
</dbReference>
<dbReference type="GO" id="GO:0000105">
    <property type="term" value="P:L-histidine biosynthetic process"/>
    <property type="evidence" value="ECO:0007669"/>
    <property type="project" value="UniProtKB-UniRule"/>
</dbReference>
<dbReference type="CDD" id="cd00609">
    <property type="entry name" value="AAT_like"/>
    <property type="match status" value="1"/>
</dbReference>
<dbReference type="Gene3D" id="3.90.1150.10">
    <property type="entry name" value="Aspartate Aminotransferase, domain 1"/>
    <property type="match status" value="1"/>
</dbReference>
<dbReference type="Gene3D" id="3.40.640.10">
    <property type="entry name" value="Type I PLP-dependent aspartate aminotransferase-like (Major domain)"/>
    <property type="match status" value="1"/>
</dbReference>
<dbReference type="HAMAP" id="MF_01023">
    <property type="entry name" value="HisC_aminotrans_2"/>
    <property type="match status" value="1"/>
</dbReference>
<dbReference type="InterPro" id="IPR001917">
    <property type="entry name" value="Aminotrans_II_pyridoxalP_BS"/>
</dbReference>
<dbReference type="InterPro" id="IPR004839">
    <property type="entry name" value="Aminotransferase_I/II_large"/>
</dbReference>
<dbReference type="InterPro" id="IPR005861">
    <property type="entry name" value="HisP_aminotrans"/>
</dbReference>
<dbReference type="InterPro" id="IPR015424">
    <property type="entry name" value="PyrdxlP-dep_Trfase"/>
</dbReference>
<dbReference type="InterPro" id="IPR015421">
    <property type="entry name" value="PyrdxlP-dep_Trfase_major"/>
</dbReference>
<dbReference type="InterPro" id="IPR015422">
    <property type="entry name" value="PyrdxlP-dep_Trfase_small"/>
</dbReference>
<dbReference type="NCBIfam" id="TIGR01141">
    <property type="entry name" value="hisC"/>
    <property type="match status" value="1"/>
</dbReference>
<dbReference type="PANTHER" id="PTHR42885:SF2">
    <property type="entry name" value="HISTIDINOL-PHOSPHATE AMINOTRANSFERASE"/>
    <property type="match status" value="1"/>
</dbReference>
<dbReference type="PANTHER" id="PTHR42885">
    <property type="entry name" value="HISTIDINOL-PHOSPHATE AMINOTRANSFERASE-RELATED"/>
    <property type="match status" value="1"/>
</dbReference>
<dbReference type="Pfam" id="PF00155">
    <property type="entry name" value="Aminotran_1_2"/>
    <property type="match status" value="1"/>
</dbReference>
<dbReference type="SUPFAM" id="SSF53383">
    <property type="entry name" value="PLP-dependent transferases"/>
    <property type="match status" value="1"/>
</dbReference>
<dbReference type="PROSITE" id="PS00599">
    <property type="entry name" value="AA_TRANSFER_CLASS_2"/>
    <property type="match status" value="1"/>
</dbReference>
<reference key="1">
    <citation type="journal article" date="2004" name="Proc. Natl. Acad. Sci. U.S.A.">
        <title>Insights into the evolution of Yersinia pestis through whole-genome comparison with Yersinia pseudotuberculosis.</title>
        <authorList>
            <person name="Chain P.S.G."/>
            <person name="Carniel E."/>
            <person name="Larimer F.W."/>
            <person name="Lamerdin J."/>
            <person name="Stoutland P.O."/>
            <person name="Regala W.M."/>
            <person name="Georgescu A.M."/>
            <person name="Vergez L.M."/>
            <person name="Land M.L."/>
            <person name="Motin V.L."/>
            <person name="Brubaker R.R."/>
            <person name="Fowler J."/>
            <person name="Hinnebusch J."/>
            <person name="Marceau M."/>
            <person name="Medigue C."/>
            <person name="Simonet M."/>
            <person name="Chenal-Francisque V."/>
            <person name="Souza B."/>
            <person name="Dacheux D."/>
            <person name="Elliott J.M."/>
            <person name="Derbise A."/>
            <person name="Hauser L.J."/>
            <person name="Garcia E."/>
        </authorList>
    </citation>
    <scope>NUCLEOTIDE SEQUENCE [LARGE SCALE GENOMIC DNA]</scope>
    <source>
        <strain>IP32953</strain>
    </source>
</reference>
<keyword id="KW-0028">Amino-acid biosynthesis</keyword>
<keyword id="KW-0032">Aminotransferase</keyword>
<keyword id="KW-0368">Histidine biosynthesis</keyword>
<keyword id="KW-0663">Pyridoxal phosphate</keyword>
<keyword id="KW-0808">Transferase</keyword>
<feature type="chain" id="PRO_0000153488" description="Histidinol-phosphate aminotransferase">
    <location>
        <begin position="1"/>
        <end position="382"/>
    </location>
</feature>
<feature type="region of interest" description="Disordered" evidence="2">
    <location>
        <begin position="360"/>
        <end position="382"/>
    </location>
</feature>
<feature type="modified residue" description="N6-(pyridoxal phosphate)lysine" evidence="1">
    <location>
        <position position="215"/>
    </location>
</feature>
<evidence type="ECO:0000255" key="1">
    <source>
        <dbReference type="HAMAP-Rule" id="MF_01023"/>
    </source>
</evidence>
<evidence type="ECO:0000256" key="2">
    <source>
        <dbReference type="SAM" id="MobiDB-lite"/>
    </source>
</evidence>
<protein>
    <recommendedName>
        <fullName evidence="1">Histidinol-phosphate aminotransferase</fullName>
        <ecNumber evidence="1">2.6.1.9</ecNumber>
    </recommendedName>
    <alternativeName>
        <fullName evidence="1">Imidazole acetol-phosphate transaminase</fullName>
    </alternativeName>
</protein>